<feature type="chain" id="PRO_0000138904" description="Protease HtpX">
    <location>
        <begin position="1"/>
        <end position="287"/>
    </location>
</feature>
<feature type="transmembrane region" description="Helical" evidence="1">
    <location>
        <begin position="4"/>
        <end position="24"/>
    </location>
</feature>
<feature type="transmembrane region" description="Helical" evidence="1">
    <location>
        <begin position="36"/>
        <end position="56"/>
    </location>
</feature>
<feature type="transmembrane region" description="Helical" evidence="1">
    <location>
        <begin position="158"/>
        <end position="178"/>
    </location>
</feature>
<feature type="transmembrane region" description="Helical" evidence="1">
    <location>
        <begin position="192"/>
        <end position="212"/>
    </location>
</feature>
<feature type="active site" evidence="1">
    <location>
        <position position="144"/>
    </location>
</feature>
<feature type="binding site" evidence="1">
    <location>
        <position position="143"/>
    </location>
    <ligand>
        <name>Zn(2+)</name>
        <dbReference type="ChEBI" id="CHEBI:29105"/>
        <note>catalytic</note>
    </ligand>
</feature>
<feature type="binding site" evidence="1">
    <location>
        <position position="147"/>
    </location>
    <ligand>
        <name>Zn(2+)</name>
        <dbReference type="ChEBI" id="CHEBI:29105"/>
        <note>catalytic</note>
    </ligand>
</feature>
<feature type="binding site" evidence="1">
    <location>
        <position position="221"/>
    </location>
    <ligand>
        <name>Zn(2+)</name>
        <dbReference type="ChEBI" id="CHEBI:29105"/>
        <note>catalytic</note>
    </ligand>
</feature>
<feature type="turn" evidence="2">
    <location>
        <begin position="58"/>
        <end position="60"/>
    </location>
</feature>
<feature type="helix" evidence="2">
    <location>
        <begin position="77"/>
        <end position="93"/>
    </location>
</feature>
<feature type="strand" evidence="2">
    <location>
        <begin position="99"/>
        <end position="103"/>
    </location>
</feature>
<feature type="strand" evidence="2">
    <location>
        <begin position="106"/>
        <end position="113"/>
    </location>
</feature>
<feature type="strand" evidence="2">
    <location>
        <begin position="121"/>
        <end position="125"/>
    </location>
</feature>
<feature type="helix" evidence="2">
    <location>
        <begin position="126"/>
        <end position="131"/>
    </location>
</feature>
<feature type="helix" evidence="2">
    <location>
        <begin position="134"/>
        <end position="149"/>
    </location>
</feature>
<feature type="strand" evidence="2">
    <location>
        <begin position="153"/>
        <end position="159"/>
    </location>
</feature>
<reference key="1">
    <citation type="journal article" date="2003" name="Lancet">
        <title>Genome sequence of Vibrio parahaemolyticus: a pathogenic mechanism distinct from that of V. cholerae.</title>
        <authorList>
            <person name="Makino K."/>
            <person name="Oshima K."/>
            <person name="Kurokawa K."/>
            <person name="Yokoyama K."/>
            <person name="Uda T."/>
            <person name="Tagomori K."/>
            <person name="Iijima Y."/>
            <person name="Najima M."/>
            <person name="Nakano M."/>
            <person name="Yamashita A."/>
            <person name="Kubota Y."/>
            <person name="Kimura S."/>
            <person name="Yasunaga T."/>
            <person name="Honda T."/>
            <person name="Shinagawa H."/>
            <person name="Hattori M."/>
            <person name="Iida T."/>
        </authorList>
    </citation>
    <scope>NUCLEOTIDE SEQUENCE [LARGE SCALE GENOMIC DNA]</scope>
    <source>
        <strain>RIMD 2210633</strain>
    </source>
</reference>
<reference key="2">
    <citation type="submission" date="2009-02" db="PDB data bank">
        <title>The crystal structure of heat shock protein Htpx domain from Vibrio parahaemolyticus RIMD 2210633.</title>
        <authorList>
            <consortium name="Midwest center for structural genomics (MCSG)"/>
        </authorList>
    </citation>
    <scope>X-RAY CRYSTALLOGRAPHY (1.86 ANGSTROMS) OF 58-161</scope>
</reference>
<accession>Q87QN1</accession>
<comment type="cofactor">
    <cofactor evidence="1">
        <name>Zn(2+)</name>
        <dbReference type="ChEBI" id="CHEBI:29105"/>
    </cofactor>
    <text evidence="1">Binds 1 zinc ion per subunit.</text>
</comment>
<comment type="subcellular location">
    <subcellularLocation>
        <location evidence="1">Cell inner membrane</location>
        <topology evidence="1">Multi-pass membrane protein</topology>
    </subcellularLocation>
</comment>
<comment type="similarity">
    <text evidence="1">Belongs to the peptidase M48B family.</text>
</comment>
<organism>
    <name type="scientific">Vibrio parahaemolyticus serotype O3:K6 (strain RIMD 2210633)</name>
    <dbReference type="NCBI Taxonomy" id="223926"/>
    <lineage>
        <taxon>Bacteria</taxon>
        <taxon>Pseudomonadati</taxon>
        <taxon>Pseudomonadota</taxon>
        <taxon>Gammaproteobacteria</taxon>
        <taxon>Vibrionales</taxon>
        <taxon>Vibrionaceae</taxon>
        <taxon>Vibrio</taxon>
    </lineage>
</organism>
<keyword id="KW-0002">3D-structure</keyword>
<keyword id="KW-0997">Cell inner membrane</keyword>
<keyword id="KW-1003">Cell membrane</keyword>
<keyword id="KW-0378">Hydrolase</keyword>
<keyword id="KW-0472">Membrane</keyword>
<keyword id="KW-0479">Metal-binding</keyword>
<keyword id="KW-0482">Metalloprotease</keyword>
<keyword id="KW-0645">Protease</keyword>
<keyword id="KW-0812">Transmembrane</keyword>
<keyword id="KW-1133">Transmembrane helix</keyword>
<keyword id="KW-0862">Zinc</keyword>
<sequence>MKRIMLFLATNLAVVLVLSVVLNIVYATTGMQPGSLSGLLVMAAVFGFGGALISLMMSKGMALRSVGGMVIESPRNETEHWLLETVGRQAQQAGIGMPTVAIYDSADINAFATGAKRDDSLVAVSTGLLHNMTRDEAEAVLAHEVSHIANGDMVTMTLMQGVVNTFVIFLSRFIANIVASNDDEEGQGTNMMVYFGVSMVLELVFGFLASFITMWYSRHREFHADAGAARLVGKEKMIAALERLKMSQESKLDGTMMAFGINGKQSLTELLMSHPPLDKRIAALRNQ</sequence>
<evidence type="ECO:0000255" key="1">
    <source>
        <dbReference type="HAMAP-Rule" id="MF_00188"/>
    </source>
</evidence>
<evidence type="ECO:0007829" key="2">
    <source>
        <dbReference type="PDB" id="3CQB"/>
    </source>
</evidence>
<proteinExistence type="evidence at protein level"/>
<gene>
    <name evidence="1" type="primary">htpX</name>
    <name type="ordered locus">VP1118</name>
</gene>
<dbReference type="EC" id="3.4.24.-" evidence="1"/>
<dbReference type="EMBL" id="BA000031">
    <property type="protein sequence ID" value="BAC59381.1"/>
    <property type="molecule type" value="Genomic_DNA"/>
</dbReference>
<dbReference type="RefSeq" id="NP_797497.1">
    <property type="nucleotide sequence ID" value="NC_004603.1"/>
</dbReference>
<dbReference type="RefSeq" id="WP_005459987.1">
    <property type="nucleotide sequence ID" value="NC_004603.1"/>
</dbReference>
<dbReference type="PDB" id="3CQB">
    <property type="method" value="X-ray"/>
    <property type="resolution" value="1.86 A"/>
    <property type="chains" value="A/B=58-161"/>
</dbReference>
<dbReference type="PDBsum" id="3CQB"/>
<dbReference type="SMR" id="Q87QN1"/>
<dbReference type="MEROPS" id="M09.001"/>
<dbReference type="MEROPS" id="M48.002"/>
<dbReference type="GeneID" id="1188623"/>
<dbReference type="KEGG" id="vpa:VP1118"/>
<dbReference type="PATRIC" id="fig|223926.6.peg.1060"/>
<dbReference type="eggNOG" id="COG0501">
    <property type="taxonomic scope" value="Bacteria"/>
</dbReference>
<dbReference type="HOGENOM" id="CLU_042266_1_0_6"/>
<dbReference type="EvolutionaryTrace" id="Q87QN1"/>
<dbReference type="Proteomes" id="UP000002493">
    <property type="component" value="Chromosome 1"/>
</dbReference>
<dbReference type="GO" id="GO:0005886">
    <property type="term" value="C:plasma membrane"/>
    <property type="evidence" value="ECO:0007669"/>
    <property type="project" value="UniProtKB-SubCell"/>
</dbReference>
<dbReference type="GO" id="GO:0004222">
    <property type="term" value="F:metalloendopeptidase activity"/>
    <property type="evidence" value="ECO:0007669"/>
    <property type="project" value="UniProtKB-UniRule"/>
</dbReference>
<dbReference type="GO" id="GO:0008270">
    <property type="term" value="F:zinc ion binding"/>
    <property type="evidence" value="ECO:0007669"/>
    <property type="project" value="UniProtKB-UniRule"/>
</dbReference>
<dbReference type="GO" id="GO:0006508">
    <property type="term" value="P:proteolysis"/>
    <property type="evidence" value="ECO:0007669"/>
    <property type="project" value="UniProtKB-KW"/>
</dbReference>
<dbReference type="CDD" id="cd07335">
    <property type="entry name" value="M48B_HtpX_like"/>
    <property type="match status" value="1"/>
</dbReference>
<dbReference type="FunFam" id="3.30.2010.10:FF:000001">
    <property type="entry name" value="Protease HtpX"/>
    <property type="match status" value="1"/>
</dbReference>
<dbReference type="Gene3D" id="3.30.2010.10">
    <property type="entry name" value="Metalloproteases ('zincins'), catalytic domain"/>
    <property type="match status" value="1"/>
</dbReference>
<dbReference type="HAMAP" id="MF_00188">
    <property type="entry name" value="Pept_M48_protease_HtpX"/>
    <property type="match status" value="1"/>
</dbReference>
<dbReference type="InterPro" id="IPR050083">
    <property type="entry name" value="HtpX_protease"/>
</dbReference>
<dbReference type="InterPro" id="IPR022919">
    <property type="entry name" value="Pept_M48_protease_HtpX"/>
</dbReference>
<dbReference type="InterPro" id="IPR001915">
    <property type="entry name" value="Peptidase_M48"/>
</dbReference>
<dbReference type="NCBIfam" id="NF003965">
    <property type="entry name" value="PRK05457.1"/>
    <property type="match status" value="1"/>
</dbReference>
<dbReference type="PANTHER" id="PTHR43221">
    <property type="entry name" value="PROTEASE HTPX"/>
    <property type="match status" value="1"/>
</dbReference>
<dbReference type="PANTHER" id="PTHR43221:SF1">
    <property type="entry name" value="PROTEASE HTPX"/>
    <property type="match status" value="1"/>
</dbReference>
<dbReference type="Pfam" id="PF01435">
    <property type="entry name" value="Peptidase_M48"/>
    <property type="match status" value="1"/>
</dbReference>
<name>HTPX_VIBPA</name>
<protein>
    <recommendedName>
        <fullName evidence="1">Protease HtpX</fullName>
        <ecNumber evidence="1">3.4.24.-</ecNumber>
    </recommendedName>
    <alternativeName>
        <fullName evidence="1">Heat shock protein HtpX</fullName>
    </alternativeName>
</protein>